<gene>
    <name evidence="1" type="primary">RBCS5</name>
    <name type="synonym">RBCS-5</name>
</gene>
<name>RBS5_ACEPE</name>
<sequence>MAAAMMNKTIVVSKDGCARSSSIPKVATNKMGFASAVAMKKSREMMVWQPFNNKMFETFSYLPPLTDEQISKQVDYILANSWTPCLEFAASDQAYAGNENCIRMGPVASTYQDNRYWTMWKLPMFGCTDGSQVLSEIQACTKAFPDAYIRLVCFDANRQVQISGFLVHRPPTATDYRLPADRQV</sequence>
<dbReference type="EMBL" id="X51810">
    <property type="protein sequence ID" value="CAA36107.1"/>
    <property type="molecule type" value="mRNA"/>
</dbReference>
<dbReference type="PIR" id="S05354">
    <property type="entry name" value="RKJK5C"/>
</dbReference>
<dbReference type="SMR" id="P16133"/>
<dbReference type="GO" id="GO:0009507">
    <property type="term" value="C:chloroplast"/>
    <property type="evidence" value="ECO:0007669"/>
    <property type="project" value="UniProtKB-SubCell"/>
</dbReference>
<dbReference type="GO" id="GO:0016984">
    <property type="term" value="F:ribulose-bisphosphate carboxylase activity"/>
    <property type="evidence" value="ECO:0007669"/>
    <property type="project" value="UniProtKB-UniRule"/>
</dbReference>
<dbReference type="GO" id="GO:0009853">
    <property type="term" value="P:photorespiration"/>
    <property type="evidence" value="ECO:0007669"/>
    <property type="project" value="UniProtKB-KW"/>
</dbReference>
<dbReference type="GO" id="GO:0019253">
    <property type="term" value="P:reductive pentose-phosphate cycle"/>
    <property type="evidence" value="ECO:0007669"/>
    <property type="project" value="UniProtKB-UniRule"/>
</dbReference>
<dbReference type="CDD" id="cd03527">
    <property type="entry name" value="RuBisCO_small"/>
    <property type="match status" value="1"/>
</dbReference>
<dbReference type="FunFam" id="3.30.190.10:FF:000001">
    <property type="entry name" value="Ribulose bisphosphate carboxylase small chain, chloroplastic"/>
    <property type="match status" value="1"/>
</dbReference>
<dbReference type="Gene3D" id="3.30.190.10">
    <property type="entry name" value="Ribulose bisphosphate carboxylase, small subunit"/>
    <property type="match status" value="1"/>
</dbReference>
<dbReference type="HAMAP" id="MF_00859">
    <property type="entry name" value="RuBisCO_S_bact"/>
    <property type="match status" value="1"/>
</dbReference>
<dbReference type="InterPro" id="IPR024681">
    <property type="entry name" value="RuBisCO_ssu"/>
</dbReference>
<dbReference type="InterPro" id="IPR000894">
    <property type="entry name" value="RuBisCO_ssu_dom"/>
</dbReference>
<dbReference type="InterPro" id="IPR036385">
    <property type="entry name" value="RuBisCO_ssu_sf"/>
</dbReference>
<dbReference type="PANTHER" id="PTHR31262">
    <property type="entry name" value="RIBULOSE BISPHOSPHATE CARBOXYLASE SMALL CHAIN 1, CHLOROPLASTIC"/>
    <property type="match status" value="1"/>
</dbReference>
<dbReference type="PANTHER" id="PTHR31262:SF0">
    <property type="entry name" value="RIBULOSE BISPHOSPHATE CARBOXYLASE SMALL SUBUNIT, CHLOROPLASTIC 1"/>
    <property type="match status" value="1"/>
</dbReference>
<dbReference type="Pfam" id="PF00101">
    <property type="entry name" value="RuBisCO_small"/>
    <property type="match status" value="1"/>
</dbReference>
<dbReference type="PRINTS" id="PR00152">
    <property type="entry name" value="RUBISCOSMALL"/>
</dbReference>
<dbReference type="SMART" id="SM00961">
    <property type="entry name" value="RuBisCO_small"/>
    <property type="match status" value="1"/>
</dbReference>
<dbReference type="SUPFAM" id="SSF55239">
    <property type="entry name" value="RuBisCO, small subunit"/>
    <property type="match status" value="1"/>
</dbReference>
<accession>P16133</accession>
<evidence type="ECO:0000255" key="1">
    <source>
        <dbReference type="HAMAP-Rule" id="MF_00860"/>
    </source>
</evidence>
<reference key="1">
    <citation type="journal article" date="1989" name="Mol. Gen. Genet.">
        <title>Strong homology between the small subunit of ribulose-1,5-bisphosphate carboxylase/oxygenase of two species of Acetabularia and the occurrence of unusual codon usage.</title>
        <authorList>
            <person name="Schneider S.U."/>
            <person name="Leible M.B."/>
            <person name="Yang X.P."/>
        </authorList>
    </citation>
    <scope>NUCLEOTIDE SEQUENCE [MRNA]</scope>
    <source>
        <strain>17</strain>
    </source>
</reference>
<comment type="function">
    <text evidence="1">RuBisCO catalyzes two reactions: the carboxylation of D-ribulose 1,5-bisphosphate, the primary event in carbon dioxide fixation, as well as the oxidative fragmentation of the pentose substrate. Both reactions occur simultaneously and in competition at the same active site. Although the small subunit is not catalytic it is essential for maximal activity.</text>
</comment>
<comment type="subunit">
    <text evidence="1">Heterohexadecamer of 8 large and 8 small subunits.</text>
</comment>
<comment type="subcellular location">
    <subcellularLocation>
        <location evidence="1">Plastid</location>
        <location evidence="1">Chloroplast</location>
    </subcellularLocation>
</comment>
<comment type="miscellaneous">
    <text evidence="1">The basic functional RuBisCO is composed of a large chain homodimer in a 'head-to-tail' conformation. In form I RuBisCO this homodimer is arranged in a barrel-like tetramer with the small subunits forming a tetrameric 'cap' on each end of the 'barrel'.</text>
</comment>
<comment type="similarity">
    <text evidence="1">Belongs to the RuBisCO small chain family.</text>
</comment>
<organism>
    <name type="scientific">Acetabularia peniculus</name>
    <name type="common">Green alga</name>
    <name type="synonym">Polyphysa peniculus</name>
    <dbReference type="NCBI Taxonomy" id="35862"/>
    <lineage>
        <taxon>Eukaryota</taxon>
        <taxon>Viridiplantae</taxon>
        <taxon>Chlorophyta</taxon>
        <taxon>Ulvophyceae</taxon>
        <taxon>TCBD clade</taxon>
        <taxon>Dasycladales</taxon>
        <taxon>Polyphysaceae</taxon>
        <taxon>Acetabularia</taxon>
    </lineage>
</organism>
<feature type="transit peptide" description="Chloroplast" evidence="1">
    <location>
        <begin position="1"/>
        <end position="43"/>
    </location>
</feature>
<feature type="chain" id="PRO_0000031451" description="Ribulose bisphosphate carboxylase small subunit, chloroplastic 5" evidence="1">
    <location>
        <begin position="44"/>
        <end position="184"/>
    </location>
</feature>
<keyword id="KW-0113">Calvin cycle</keyword>
<keyword id="KW-0120">Carbon dioxide fixation</keyword>
<keyword id="KW-0150">Chloroplast</keyword>
<keyword id="KW-0601">Photorespiration</keyword>
<keyword id="KW-0602">Photosynthesis</keyword>
<keyword id="KW-0934">Plastid</keyword>
<keyword id="KW-0809">Transit peptide</keyword>
<protein>
    <recommendedName>
        <fullName evidence="1">Ribulose bisphosphate carboxylase small subunit, chloroplastic 5</fullName>
        <shortName evidence="1">RuBisCO small subunit 5</shortName>
    </recommendedName>
</protein>
<proteinExistence type="evidence at transcript level"/>